<reference key="1">
    <citation type="journal article" date="1998" name="J. Mol. Biol.">
        <title>Molecular analysis of the trimethylamine N-oxide (TMAO) reductase respiratory system from a Shewanella species.</title>
        <authorList>
            <person name="Dos Santos J.P."/>
            <person name="Iobbi-Nivol C."/>
            <person name="Couillault C."/>
            <person name="Giordano G."/>
            <person name="Mejean V."/>
        </authorList>
    </citation>
    <scope>NUCLEOTIDE SEQUENCE [GENOMIC DNA]</scope>
    <scope>PROTEIN SEQUENCE OF 32-61</scope>
    <scope>INDUCTION</scope>
</reference>
<reference key="2">
    <citation type="journal article" date="1998" name="J. Mol. Biol.">
        <title>Crystal structure of oxidized trimethylamine N-oxide reductase from Shewanella massilia at 2.5-A resolution.</title>
        <authorList>
            <person name="Czjzek M."/>
            <person name="Dos Santos J.P."/>
            <person name="Pommier J."/>
            <person name="Giordano G."/>
            <person name="Mejean V."/>
            <person name="Haser R."/>
        </authorList>
    </citation>
    <scope>X-RAY CRYSTALLOGRAPHY (2.5 ANGSTROMS) IN COMPLEX WITH OXIDIZED MO-BIS-MGD</scope>
    <scope>COFACTOR</scope>
</reference>
<name>TORA_SHEMA</name>
<sequence>MNRRDFLKGIASSSFVVLGGSSVLTPLNALAKAGINEDEWLTTGSHFGAFKMKRKNGVIAEVKPFDLDKYPTDMINGIRGMVYNPSRVRYPMVRLDFLLKGHKSNTHQRGDFRFVRVTWDKALTLFKHSLDEVQTQYGPSGLHAGQTGWRATGQLHSSTSHMQRAVGMHGNYVKKIGDYSTGAGQTILPYVLGSTEVYAQGTSWPLILEHSDTIVLWSNDPYKNLQVGWNAETHESFAYLAQLKEKVKQGKIRVISIDPVVTKTQAYLGCEQLYVNPQTDVTLMLAIAHEMISKKLYDDKFIQGYSLGFEEFVPYVMGTKDGVAKTPEWAAPICGVEAHVIRDLAKTLVKGRTQFMMGWCIQRQQHGEQPYWMAAVLATMIGQIGLPGGGISYGHHYSSIGVPSSGAAAPGAFPRNLDENQKPLFDSSDFKGASSTIPVARWIDAILEPGKTIDANGSKVVYPDIKMMIFSGNNPWNHHQDRNRMKQAFHKLECVVTVDVNWTATCRFSDIVLPACTTYERNDIDVYGAYANRGILAMQKMVEPLFDSLSDFEIFTRFAAVLGKEKEYTRNMGEMEWLETLYNECKAANAGKFEMPDFATFWKQGYVHFGDGEVWTRHADFRNDPEINPLGTPSGLIEIFSRKIDQFGYDDCKGHPTWMEKTERSHGGPGSDKHPIWLQSCHPDKRLHSQMCESREYRETYAVNGREPVYISPVDAKARGIKDGDIVRVFNDRGQLLAGAVVSDNFPKGIVRIHEGAWYGPVGKDGSTEGGAEVGALCSYGDPNTLTLDIGTSKLAQACSAYTCLVEFEKYQGKVPKVSSFDGPIEVEI</sequence>
<comment type="function">
    <text>Reduces trimethylamine-N-oxide (TMAO) into trimethylamine; an anaerobic reaction coupled to energy-yielding reactions.</text>
</comment>
<comment type="catalytic activity">
    <reaction>
        <text>trimethylamine + 2 Fe(III)-[cytochrome c] + H2O = trimethylamine N-oxide + 2 Fe(II)-[cytochrome c] + 3 H(+)</text>
        <dbReference type="Rhea" id="RHEA:24236"/>
        <dbReference type="Rhea" id="RHEA-COMP:10350"/>
        <dbReference type="Rhea" id="RHEA-COMP:14399"/>
        <dbReference type="ChEBI" id="CHEBI:15377"/>
        <dbReference type="ChEBI" id="CHEBI:15378"/>
        <dbReference type="ChEBI" id="CHEBI:15724"/>
        <dbReference type="ChEBI" id="CHEBI:29033"/>
        <dbReference type="ChEBI" id="CHEBI:29034"/>
        <dbReference type="ChEBI" id="CHEBI:58389"/>
        <dbReference type="EC" id="1.7.2.3"/>
    </reaction>
</comment>
<comment type="cofactor">
    <cofactor evidence="3">
        <name>Mo-bis(molybdopterin guanine dinucleotide)</name>
        <dbReference type="ChEBI" id="CHEBI:60539"/>
    </cofactor>
    <text evidence="3">Binds 1 molybdenum-bis(molybdopterin guanine dinucleotide) (Mo-bis-MGD) cofactor per subunit.</text>
</comment>
<comment type="subcellular location">
    <subcellularLocation>
        <location>Periplasm</location>
    </subcellularLocation>
</comment>
<comment type="induction">
    <text evidence="2">By TMAO and DMSO.</text>
</comment>
<comment type="PTM">
    <text>Predicted to be exported by the Tat system. The position of the signal peptide cleavage has been experimentally proven.</text>
</comment>
<comment type="miscellaneous">
    <text>Although torA is induced by both TMAO and DMSO, only TMAO is used as a natural substrate.</text>
</comment>
<comment type="similarity">
    <text evidence="4">Belongs to the prokaryotic molybdopterin-containing oxidoreductase family.</text>
</comment>
<accession>O87948</accession>
<protein>
    <recommendedName>
        <fullName>Trimethylamine-N-oxide reductase</fullName>
        <shortName>TMAO reductase</shortName>
        <shortName>Trimethylamine oxidase</shortName>
        <ecNumber>1.7.2.3</ecNumber>
    </recommendedName>
</protein>
<gene>
    <name type="primary">torA</name>
</gene>
<proteinExistence type="evidence at protein level"/>
<keyword id="KW-0002">3D-structure</keyword>
<keyword id="KW-0903">Direct protein sequencing</keyword>
<keyword id="KW-0479">Metal-binding</keyword>
<keyword id="KW-0500">Molybdenum</keyword>
<keyword id="KW-0560">Oxidoreductase</keyword>
<keyword id="KW-0574">Periplasm</keyword>
<keyword id="KW-0732">Signal</keyword>
<organism>
    <name type="scientific">Shewanella massilia</name>
    <dbReference type="NCBI Taxonomy" id="76854"/>
    <lineage>
        <taxon>Bacteria</taxon>
        <taxon>Pseudomonadati</taxon>
        <taxon>Pseudomonadota</taxon>
        <taxon>Gammaproteobacteria</taxon>
        <taxon>Alteromonadales</taxon>
        <taxon>Shewanellaceae</taxon>
        <taxon>Shewanella</taxon>
    </lineage>
</organism>
<feature type="signal peptide" description="Tat-type signal" evidence="1 2">
    <location>
        <begin position="1"/>
        <end position="31"/>
    </location>
</feature>
<feature type="chain" id="PRO_0000019157" description="Trimethylamine-N-oxide reductase">
    <location>
        <begin position="32"/>
        <end position="829"/>
    </location>
</feature>
<feature type="binding site">
    <location>
        <position position="180"/>
    </location>
    <ligand>
        <name>Mo-bis(molybdopterin guanine dinucleotide)</name>
        <dbReference type="ChEBI" id="CHEBI:60539"/>
    </ligand>
    <ligandPart>
        <name>Mo</name>
        <dbReference type="ChEBI" id="CHEBI:28685"/>
    </ligandPart>
</feature>
<feature type="strand" evidence="5">
    <location>
        <begin position="41"/>
        <end position="45"/>
    </location>
</feature>
<feature type="strand" evidence="5">
    <location>
        <begin position="48"/>
        <end position="55"/>
    </location>
</feature>
<feature type="strand" evidence="5">
    <location>
        <begin position="58"/>
        <end position="64"/>
    </location>
</feature>
<feature type="helix" evidence="5">
    <location>
        <begin position="73"/>
        <end position="76"/>
    </location>
</feature>
<feature type="helix" evidence="5">
    <location>
        <begin position="78"/>
        <end position="82"/>
    </location>
</feature>
<feature type="strand" evidence="5">
    <location>
        <begin position="92"/>
        <end position="94"/>
    </location>
</feature>
<feature type="helix" evidence="5">
    <location>
        <begin position="95"/>
        <end position="100"/>
    </location>
</feature>
<feature type="helix" evidence="5">
    <location>
        <begin position="101"/>
        <end position="103"/>
    </location>
</feature>
<feature type="helix" evidence="5">
    <location>
        <begin position="106"/>
        <end position="108"/>
    </location>
</feature>
<feature type="strand" evidence="5">
    <location>
        <begin position="113"/>
        <end position="116"/>
    </location>
</feature>
<feature type="helix" evidence="5">
    <location>
        <begin position="119"/>
        <end position="136"/>
    </location>
</feature>
<feature type="helix" evidence="5">
    <location>
        <begin position="139"/>
        <end position="141"/>
    </location>
</feature>
<feature type="turn" evidence="5">
    <location>
        <begin position="154"/>
        <end position="156"/>
    </location>
</feature>
<feature type="helix" evidence="5">
    <location>
        <begin position="158"/>
        <end position="167"/>
    </location>
</feature>
<feature type="strand" evidence="5">
    <location>
        <begin position="173"/>
        <end position="176"/>
    </location>
</feature>
<feature type="strand" evidence="5">
    <location>
        <begin position="179"/>
        <end position="181"/>
    </location>
</feature>
<feature type="helix" evidence="5">
    <location>
        <begin position="184"/>
        <end position="191"/>
    </location>
</feature>
<feature type="helix" evidence="5">
    <location>
        <begin position="204"/>
        <end position="210"/>
    </location>
</feature>
<feature type="strand" evidence="5">
    <location>
        <begin position="212"/>
        <end position="218"/>
    </location>
</feature>
<feature type="helix" evidence="5">
    <location>
        <begin position="221"/>
        <end position="224"/>
    </location>
</feature>
<feature type="strand" evidence="5">
    <location>
        <begin position="229"/>
        <end position="231"/>
    </location>
</feature>
<feature type="helix" evidence="5">
    <location>
        <begin position="236"/>
        <end position="248"/>
    </location>
</feature>
<feature type="strand" evidence="5">
    <location>
        <begin position="251"/>
        <end position="257"/>
    </location>
</feature>
<feature type="helix" evidence="5">
    <location>
        <begin position="263"/>
        <end position="268"/>
    </location>
</feature>
<feature type="strand" evidence="5">
    <location>
        <begin position="271"/>
        <end position="273"/>
    </location>
</feature>
<feature type="helix" evidence="5">
    <location>
        <begin position="280"/>
        <end position="293"/>
    </location>
</feature>
<feature type="helix" evidence="5">
    <location>
        <begin position="299"/>
        <end position="305"/>
    </location>
</feature>
<feature type="helix" evidence="5">
    <location>
        <begin position="309"/>
        <end position="317"/>
    </location>
</feature>
<feature type="turn" evidence="5">
    <location>
        <begin position="318"/>
        <end position="321"/>
    </location>
</feature>
<feature type="helix" evidence="5">
    <location>
        <begin position="327"/>
        <end position="334"/>
    </location>
</feature>
<feature type="helix" evidence="5">
    <location>
        <begin position="338"/>
        <end position="350"/>
    </location>
</feature>
<feature type="strand" evidence="5">
    <location>
        <begin position="353"/>
        <end position="357"/>
    </location>
</feature>
<feature type="helix" evidence="5">
    <location>
        <begin position="360"/>
        <end position="362"/>
    </location>
</feature>
<feature type="turn" evidence="5">
    <location>
        <begin position="365"/>
        <end position="367"/>
    </location>
</feature>
<feature type="helix" evidence="5">
    <location>
        <begin position="368"/>
        <end position="381"/>
    </location>
</feature>
<feature type="strand" evidence="5">
    <location>
        <begin position="390"/>
        <end position="393"/>
    </location>
</feature>
<feature type="turn" evidence="5">
    <location>
        <begin position="398"/>
        <end position="401"/>
    </location>
</feature>
<feature type="strand" evidence="5">
    <location>
        <begin position="435"/>
        <end position="438"/>
    </location>
</feature>
<feature type="helix" evidence="5">
    <location>
        <begin position="439"/>
        <end position="441"/>
    </location>
</feature>
<feature type="helix" evidence="5">
    <location>
        <begin position="442"/>
        <end position="447"/>
    </location>
</feature>
<feature type="strand" evidence="5">
    <location>
        <begin position="452"/>
        <end position="454"/>
    </location>
</feature>
<feature type="strand" evidence="5">
    <location>
        <begin position="456"/>
        <end position="461"/>
    </location>
</feature>
<feature type="strand" evidence="5">
    <location>
        <begin position="467"/>
        <end position="472"/>
    </location>
</feature>
<feature type="helix" evidence="5">
    <location>
        <begin position="475"/>
        <end position="478"/>
    </location>
</feature>
<feature type="helix" evidence="5">
    <location>
        <begin position="482"/>
        <end position="489"/>
    </location>
</feature>
<feature type="strand" evidence="5">
    <location>
        <begin position="493"/>
        <end position="501"/>
    </location>
</feature>
<feature type="helix" evidence="5">
    <location>
        <begin position="504"/>
        <end position="507"/>
    </location>
</feature>
<feature type="strand" evidence="5">
    <location>
        <begin position="510"/>
        <end position="515"/>
    </location>
</feature>
<feature type="helix" evidence="5">
    <location>
        <begin position="518"/>
        <end position="520"/>
    </location>
</feature>
<feature type="strand" evidence="5">
    <location>
        <begin position="523"/>
        <end position="527"/>
    </location>
</feature>
<feature type="turn" evidence="5">
    <location>
        <begin position="529"/>
        <end position="531"/>
    </location>
</feature>
<feature type="strand" evidence="5">
    <location>
        <begin position="534"/>
        <end position="538"/>
    </location>
</feature>
<feature type="helix" evidence="5">
    <location>
        <begin position="551"/>
        <end position="561"/>
    </location>
</feature>
<feature type="helix" evidence="5">
    <location>
        <begin position="565"/>
        <end position="569"/>
    </location>
</feature>
<feature type="helix" evidence="5">
    <location>
        <begin position="574"/>
        <end position="589"/>
    </location>
</feature>
<feature type="turn" evidence="5">
    <location>
        <begin position="590"/>
        <end position="592"/>
    </location>
</feature>
<feature type="helix" evidence="5">
    <location>
        <begin position="598"/>
        <end position="604"/>
    </location>
</feature>
<feature type="strand" evidence="5">
    <location>
        <begin position="606"/>
        <end position="608"/>
    </location>
</feature>
<feature type="helix" evidence="5">
    <location>
        <begin position="619"/>
        <end position="623"/>
    </location>
</feature>
<feature type="turn" evidence="5">
    <location>
        <begin position="625"/>
        <end position="627"/>
    </location>
</feature>
<feature type="strand" evidence="5">
    <location>
        <begin position="631"/>
        <end position="640"/>
    </location>
</feature>
<feature type="helix" evidence="5">
    <location>
        <begin position="642"/>
        <end position="645"/>
    </location>
</feature>
<feature type="strand" evidence="5">
    <location>
        <begin position="665"/>
        <end position="668"/>
    </location>
</feature>
<feature type="turn" evidence="5">
    <location>
        <begin position="669"/>
        <end position="673"/>
    </location>
</feature>
<feature type="strand" evidence="5">
    <location>
        <begin position="676"/>
        <end position="679"/>
    </location>
</feature>
<feature type="strand" evidence="5">
    <location>
        <begin position="684"/>
        <end position="687"/>
    </location>
</feature>
<feature type="turn" evidence="5">
    <location>
        <begin position="691"/>
        <end position="693"/>
    </location>
</feature>
<feature type="helix" evidence="5">
    <location>
        <begin position="695"/>
        <end position="698"/>
    </location>
</feature>
<feature type="turn" evidence="5">
    <location>
        <begin position="699"/>
        <end position="701"/>
    </location>
</feature>
<feature type="strand" evidence="5">
    <location>
        <begin position="708"/>
        <end position="711"/>
    </location>
</feature>
<feature type="helix" evidence="5">
    <location>
        <begin position="713"/>
        <end position="718"/>
    </location>
</feature>
<feature type="strand" evidence="5">
    <location>
        <begin position="726"/>
        <end position="730"/>
    </location>
</feature>
<feature type="strand" evidence="5">
    <location>
        <begin position="735"/>
        <end position="742"/>
    </location>
</feature>
<feature type="strand" evidence="5">
    <location>
        <begin position="750"/>
        <end position="752"/>
    </location>
</feature>
<feature type="helix" evidence="5">
    <location>
        <begin position="769"/>
        <end position="772"/>
    </location>
</feature>
<feature type="strand" evidence="5">
    <location>
        <begin position="777"/>
        <end position="780"/>
    </location>
</feature>
<feature type="helix" evidence="5">
    <location>
        <begin position="783"/>
        <end position="785"/>
    </location>
</feature>
<feature type="turn" evidence="5">
    <location>
        <begin position="794"/>
        <end position="796"/>
    </location>
</feature>
<feature type="strand" evidence="5">
    <location>
        <begin position="805"/>
        <end position="810"/>
    </location>
</feature>
<feature type="strand" evidence="5">
    <location>
        <begin position="820"/>
        <end position="822"/>
    </location>
</feature>
<dbReference type="EC" id="1.7.2.3"/>
<dbReference type="EMBL" id="AJ006085">
    <property type="protein sequence ID" value="CAA06851.1"/>
    <property type="molecule type" value="Genomic_DNA"/>
</dbReference>
<dbReference type="PDB" id="1TMO">
    <property type="method" value="X-ray"/>
    <property type="resolution" value="2.50 A"/>
    <property type="chains" value="A=1-829"/>
</dbReference>
<dbReference type="PDBsum" id="1TMO"/>
<dbReference type="SMR" id="O87948"/>
<dbReference type="KEGG" id="ag:CAA06851"/>
<dbReference type="BRENDA" id="1.7.2.3">
    <property type="organism ID" value="5705"/>
</dbReference>
<dbReference type="EvolutionaryTrace" id="O87948"/>
<dbReference type="GO" id="GO:0030288">
    <property type="term" value="C:outer membrane-bounded periplasmic space"/>
    <property type="evidence" value="ECO:0007669"/>
    <property type="project" value="TreeGrafter"/>
</dbReference>
<dbReference type="GO" id="GO:0009055">
    <property type="term" value="F:electron transfer activity"/>
    <property type="evidence" value="ECO:0007669"/>
    <property type="project" value="TreeGrafter"/>
</dbReference>
<dbReference type="GO" id="GO:0030151">
    <property type="term" value="F:molybdenum ion binding"/>
    <property type="evidence" value="ECO:0007669"/>
    <property type="project" value="InterPro"/>
</dbReference>
<dbReference type="GO" id="GO:0043546">
    <property type="term" value="F:molybdopterin cofactor binding"/>
    <property type="evidence" value="ECO:0007669"/>
    <property type="project" value="InterPro"/>
</dbReference>
<dbReference type="GO" id="GO:0050626">
    <property type="term" value="F:trimethylamine-N-oxide reductase (cytochrome c) activity"/>
    <property type="evidence" value="ECO:0007669"/>
    <property type="project" value="UniProtKB-EC"/>
</dbReference>
<dbReference type="GO" id="GO:0009061">
    <property type="term" value="P:anaerobic respiration"/>
    <property type="evidence" value="ECO:0007669"/>
    <property type="project" value="TreeGrafter"/>
</dbReference>
<dbReference type="CDD" id="cd02793">
    <property type="entry name" value="MopB_CT_DMSOR-BSOR-TMAOR"/>
    <property type="match status" value="1"/>
</dbReference>
<dbReference type="CDD" id="cd02769">
    <property type="entry name" value="MopB_DMSOR-BSOR-TMAOR"/>
    <property type="match status" value="1"/>
</dbReference>
<dbReference type="FunFam" id="2.40.40.20:FF:000009">
    <property type="entry name" value="Biotin sulfoxide reductase 2"/>
    <property type="match status" value="1"/>
</dbReference>
<dbReference type="FunFam" id="3.40.228.10:FF:000003">
    <property type="entry name" value="Biotin sulfoxide reductase 2"/>
    <property type="match status" value="1"/>
</dbReference>
<dbReference type="Gene3D" id="2.40.40.20">
    <property type="match status" value="1"/>
</dbReference>
<dbReference type="Gene3D" id="3.40.50.740">
    <property type="match status" value="1"/>
</dbReference>
<dbReference type="Gene3D" id="3.40.228.10">
    <property type="entry name" value="Dimethylsulfoxide Reductase, domain 2"/>
    <property type="match status" value="1"/>
</dbReference>
<dbReference type="Gene3D" id="3.90.55.10">
    <property type="entry name" value="Dimethylsulfoxide Reductase, domain 3"/>
    <property type="match status" value="1"/>
</dbReference>
<dbReference type="InterPro" id="IPR009010">
    <property type="entry name" value="Asp_de-COase-like_dom_sf"/>
</dbReference>
<dbReference type="InterPro" id="IPR041954">
    <property type="entry name" value="CT_DMSOR/BSOR/TMAOR"/>
</dbReference>
<dbReference type="InterPro" id="IPR041460">
    <property type="entry name" value="Molybdopterin_N"/>
</dbReference>
<dbReference type="InterPro" id="IPR006657">
    <property type="entry name" value="MoPterin_dinucl-bd_dom"/>
</dbReference>
<dbReference type="InterPro" id="IPR006656">
    <property type="entry name" value="Mopterin_OxRdtase"/>
</dbReference>
<dbReference type="InterPro" id="IPR006655">
    <property type="entry name" value="Mopterin_OxRdtase_prok_CS"/>
</dbReference>
<dbReference type="InterPro" id="IPR050612">
    <property type="entry name" value="Prok_Mopterin_Oxidored"/>
</dbReference>
<dbReference type="InterPro" id="IPR006311">
    <property type="entry name" value="TAT_signal"/>
</dbReference>
<dbReference type="InterPro" id="IPR011887">
    <property type="entry name" value="TorA"/>
</dbReference>
<dbReference type="NCBIfam" id="NF011682">
    <property type="entry name" value="PRK15102.1"/>
    <property type="match status" value="1"/>
</dbReference>
<dbReference type="NCBIfam" id="TIGR02164">
    <property type="entry name" value="torA"/>
    <property type="match status" value="1"/>
</dbReference>
<dbReference type="PANTHER" id="PTHR43742">
    <property type="entry name" value="TRIMETHYLAMINE-N-OXIDE REDUCTASE"/>
    <property type="match status" value="1"/>
</dbReference>
<dbReference type="PANTHER" id="PTHR43742:SF4">
    <property type="entry name" value="TRIMETHYLAMINE-N-OXIDE REDUCTASE 1"/>
    <property type="match status" value="1"/>
</dbReference>
<dbReference type="Pfam" id="PF00384">
    <property type="entry name" value="Molybdopterin"/>
    <property type="match status" value="1"/>
</dbReference>
<dbReference type="Pfam" id="PF18364">
    <property type="entry name" value="Molybdopterin_N"/>
    <property type="match status" value="1"/>
</dbReference>
<dbReference type="Pfam" id="PF01568">
    <property type="entry name" value="Molydop_binding"/>
    <property type="match status" value="1"/>
</dbReference>
<dbReference type="SUPFAM" id="SSF50692">
    <property type="entry name" value="ADC-like"/>
    <property type="match status" value="1"/>
</dbReference>
<dbReference type="SUPFAM" id="SSF53706">
    <property type="entry name" value="Formate dehydrogenase/DMSO reductase, domains 1-3"/>
    <property type="match status" value="1"/>
</dbReference>
<dbReference type="PROSITE" id="PS00490">
    <property type="entry name" value="MOLYBDOPTERIN_PROK_2"/>
    <property type="match status" value="1"/>
</dbReference>
<dbReference type="PROSITE" id="PS00932">
    <property type="entry name" value="MOLYBDOPTERIN_PROK_3"/>
    <property type="match status" value="1"/>
</dbReference>
<dbReference type="PROSITE" id="PS51318">
    <property type="entry name" value="TAT"/>
    <property type="match status" value="1"/>
</dbReference>
<evidence type="ECO:0000255" key="1">
    <source>
        <dbReference type="PROSITE-ProRule" id="PRU00648"/>
    </source>
</evidence>
<evidence type="ECO:0000269" key="2">
    <source>
    </source>
</evidence>
<evidence type="ECO:0000269" key="3">
    <source>
    </source>
</evidence>
<evidence type="ECO:0000305" key="4"/>
<evidence type="ECO:0007829" key="5">
    <source>
        <dbReference type="PDB" id="1TMO"/>
    </source>
</evidence>